<comment type="function">
    <text evidence="1">Plasma membrane osmosensor that activates the high osmolarity glycerol (HOG) MAPK signaling pathway in response to high osmolarity. Detects changes in external osmolarity and activates PBS2 through the stimulation of STE11 and targets PBS2 to the plasma membrane. PBS2 activation leads to changes in glycerol production that helps to balance the intracellular and external osmotic pressures. Activates also HOG1 in response to heat stress and mediates resistance to oxidative stress. Involved in the regulation of the mating pathway. May be a receptor that feeds into the pseudohyphal growth pathway (By similarity).</text>
</comment>
<comment type="subunit">
    <text evidence="1">Forms homooligomers (By similarity). Interacts (via the SH3 domain) with PBS2. Interacts with FUS1, STE11, STE50 and RNA polymerase II (By similarity).</text>
</comment>
<comment type="subcellular location">
    <subcellularLocation>
        <location evidence="1">Cell membrane</location>
        <topology evidence="1">Multi-pass membrane protein</topology>
    </subcellularLocation>
    <subcellularLocation>
        <location evidence="1">Bud</location>
    </subcellularLocation>
    <subcellularLocation>
        <location evidence="1">Bud neck</location>
    </subcellularLocation>
    <subcellularLocation>
        <location evidence="1">Cell projection</location>
    </subcellularLocation>
    <text evidence="1">Localizes at the tip of the mating projection during conjugation.</text>
</comment>
<comment type="similarity">
    <text evidence="6">Belongs to the SHO1 family.</text>
</comment>
<proteinExistence type="inferred from homology"/>
<sequence length="367" mass="41112">MSISSKIRPTPRKPSRMATDHSFKMKNFYADPFAISSISLAIVSWVIAIGGSISSASTNESFPRFTWWGIVYQFLIICSLMLFYCFDLVDHYRIFITTSIAVAFVYNTNSATNLVYADGPKKAAASAGVILLSIINLIWILYYGGDNASPTNRWIDSFSIKGIRPSPLENSLHRARRRGNRNTTPYQNNVYNDAIRDSGYATQFDGYPQQQPSHTNYVSSTALAGFENTQPNTSEAVNLHLNTLQQRINSASNAKETNDNSNNQTNTNIGNTFDTDFSNGNTETTMGDTLGLYSDIGDDNFIYKAKALYPYDADDDDAYEISFEQNEILQVSDIEGRWWKARRANGETGIIPSNYVQLIDGPEEMHR</sequence>
<gene>
    <name type="primary">SHO1</name>
    <name type="synonym">SSU81</name>
    <name type="ORF">AWRI1631_51830</name>
</gene>
<dbReference type="EMBL" id="ABSV01000711">
    <property type="protein sequence ID" value="EDZ72547.1"/>
    <property type="molecule type" value="Genomic_DNA"/>
</dbReference>
<dbReference type="SMR" id="B5VHP4"/>
<dbReference type="GlyCosmos" id="B5VHP4">
    <property type="glycosylation" value="1 site, No reported glycans"/>
</dbReference>
<dbReference type="Proteomes" id="UP000008988">
    <property type="component" value="Unassembled WGS sequence"/>
</dbReference>
<dbReference type="GO" id="GO:0042995">
    <property type="term" value="C:cell projection"/>
    <property type="evidence" value="ECO:0007669"/>
    <property type="project" value="UniProtKB-SubCell"/>
</dbReference>
<dbReference type="GO" id="GO:0005935">
    <property type="term" value="C:cellular bud neck"/>
    <property type="evidence" value="ECO:0007669"/>
    <property type="project" value="UniProtKB-SubCell"/>
</dbReference>
<dbReference type="GO" id="GO:0005886">
    <property type="term" value="C:plasma membrane"/>
    <property type="evidence" value="ECO:0007669"/>
    <property type="project" value="UniProtKB-SubCell"/>
</dbReference>
<dbReference type="GO" id="GO:0030833">
    <property type="term" value="P:regulation of actin filament polymerization"/>
    <property type="evidence" value="ECO:0007669"/>
    <property type="project" value="TreeGrafter"/>
</dbReference>
<dbReference type="CDD" id="cd11855">
    <property type="entry name" value="SH3_Sho1p"/>
    <property type="match status" value="1"/>
</dbReference>
<dbReference type="FunFam" id="2.30.30.40:FF:000213">
    <property type="entry name" value="High osmolarity signaling protein SHO1"/>
    <property type="match status" value="1"/>
</dbReference>
<dbReference type="Gene3D" id="2.30.30.40">
    <property type="entry name" value="SH3 Domains"/>
    <property type="match status" value="1"/>
</dbReference>
<dbReference type="InterPro" id="IPR036028">
    <property type="entry name" value="SH3-like_dom_sf"/>
</dbReference>
<dbReference type="InterPro" id="IPR001452">
    <property type="entry name" value="SH3_domain"/>
</dbReference>
<dbReference type="InterPro" id="IPR035522">
    <property type="entry name" value="Sho1_SH3"/>
</dbReference>
<dbReference type="PANTHER" id="PTHR15735">
    <property type="entry name" value="FCH AND DOUBLE SH3 DOMAINS PROTEIN"/>
    <property type="match status" value="1"/>
</dbReference>
<dbReference type="PANTHER" id="PTHR15735:SF20">
    <property type="entry name" value="HIGH OSMOLARITY SIGNALING PROTEIN SHO1"/>
    <property type="match status" value="1"/>
</dbReference>
<dbReference type="Pfam" id="PF00018">
    <property type="entry name" value="SH3_1"/>
    <property type="match status" value="1"/>
</dbReference>
<dbReference type="PRINTS" id="PR00452">
    <property type="entry name" value="SH3DOMAIN"/>
</dbReference>
<dbReference type="SMART" id="SM00326">
    <property type="entry name" value="SH3"/>
    <property type="match status" value="1"/>
</dbReference>
<dbReference type="SUPFAM" id="SSF50044">
    <property type="entry name" value="SH3-domain"/>
    <property type="match status" value="1"/>
</dbReference>
<dbReference type="PROSITE" id="PS50002">
    <property type="entry name" value="SH3"/>
    <property type="match status" value="1"/>
</dbReference>
<organism>
    <name type="scientific">Saccharomyces cerevisiae (strain AWRI1631)</name>
    <name type="common">Baker's yeast</name>
    <dbReference type="NCBI Taxonomy" id="545124"/>
    <lineage>
        <taxon>Eukaryota</taxon>
        <taxon>Fungi</taxon>
        <taxon>Dikarya</taxon>
        <taxon>Ascomycota</taxon>
        <taxon>Saccharomycotina</taxon>
        <taxon>Saccharomycetes</taxon>
        <taxon>Saccharomycetales</taxon>
        <taxon>Saccharomycetaceae</taxon>
        <taxon>Saccharomyces</taxon>
    </lineage>
</organism>
<accession>B5VHP4</accession>
<protein>
    <recommendedName>
        <fullName>High osmolarity signaling protein SHO1</fullName>
    </recommendedName>
    <alternativeName>
        <fullName>Osmosensor SHO1</fullName>
    </alternativeName>
    <alternativeName>
        <fullName>Suppressor of SUA8-1 mutation</fullName>
    </alternativeName>
    <alternativeName>
        <fullName>Synthetic high osmolarity-sensitive protein 1</fullName>
    </alternativeName>
</protein>
<name>SHO1_YEAS6</name>
<reference key="1">
    <citation type="journal article" date="2008" name="FEMS Yeast Res.">
        <title>Comparative genome analysis of a Saccharomyces cerevisiae wine strain.</title>
        <authorList>
            <person name="Borneman A.R."/>
            <person name="Forgan A.H."/>
            <person name="Pretorius I.S."/>
            <person name="Chambers P.J."/>
        </authorList>
    </citation>
    <scope>NUCLEOTIDE SEQUENCE [LARGE SCALE GENOMIC DNA]</scope>
    <source>
        <strain>AWRI1631</strain>
    </source>
</reference>
<evidence type="ECO:0000250" key="1"/>
<evidence type="ECO:0000250" key="2">
    <source>
        <dbReference type="UniProtKB" id="P40073"/>
    </source>
</evidence>
<evidence type="ECO:0000255" key="3"/>
<evidence type="ECO:0000255" key="4">
    <source>
        <dbReference type="PROSITE-ProRule" id="PRU00192"/>
    </source>
</evidence>
<evidence type="ECO:0000256" key="5">
    <source>
        <dbReference type="SAM" id="MobiDB-lite"/>
    </source>
</evidence>
<evidence type="ECO:0000305" key="6"/>
<keyword id="KW-1003">Cell membrane</keyword>
<keyword id="KW-0966">Cell projection</keyword>
<keyword id="KW-0325">Glycoprotein</keyword>
<keyword id="KW-0472">Membrane</keyword>
<keyword id="KW-0597">Phosphoprotein</keyword>
<keyword id="KW-0728">SH3 domain</keyword>
<keyword id="KW-0346">Stress response</keyword>
<keyword id="KW-0812">Transmembrane</keyword>
<keyword id="KW-1133">Transmembrane helix</keyword>
<feature type="chain" id="PRO_0000410410" description="High osmolarity signaling protein SHO1">
    <location>
        <begin position="1"/>
        <end position="367"/>
    </location>
</feature>
<feature type="topological domain" description="Cytoplasmic" evidence="3">
    <location>
        <begin position="1"/>
        <end position="32"/>
    </location>
</feature>
<feature type="transmembrane region" description="Helical" evidence="3">
    <location>
        <begin position="33"/>
        <end position="53"/>
    </location>
</feature>
<feature type="topological domain" description="Extracellular" evidence="3">
    <location>
        <begin position="54"/>
        <end position="65"/>
    </location>
</feature>
<feature type="transmembrane region" description="Helical" evidence="3">
    <location>
        <begin position="66"/>
        <end position="86"/>
    </location>
</feature>
<feature type="topological domain" description="Cytoplasmic" evidence="3">
    <location>
        <begin position="87"/>
        <end position="93"/>
    </location>
</feature>
<feature type="transmembrane region" description="Helical" evidence="3">
    <location>
        <begin position="94"/>
        <end position="114"/>
    </location>
</feature>
<feature type="topological domain" description="Extracellular" evidence="3">
    <location>
        <begin position="115"/>
        <end position="122"/>
    </location>
</feature>
<feature type="transmembrane region" description="Helical" evidence="3">
    <location>
        <begin position="123"/>
        <end position="143"/>
    </location>
</feature>
<feature type="topological domain" description="Cytoplasmic" evidence="3">
    <location>
        <begin position="144"/>
        <end position="367"/>
    </location>
</feature>
<feature type="domain" description="SH3" evidence="4">
    <location>
        <begin position="300"/>
        <end position="361"/>
    </location>
</feature>
<feature type="region of interest" description="Disordered" evidence="5">
    <location>
        <begin position="252"/>
        <end position="276"/>
    </location>
</feature>
<feature type="compositionally biased region" description="Low complexity" evidence="5">
    <location>
        <begin position="259"/>
        <end position="272"/>
    </location>
</feature>
<feature type="modified residue" description="Phosphoserine" evidence="2">
    <location>
        <position position="166"/>
    </location>
</feature>
<feature type="glycosylation site" description="N-linked (GlcNAc...) asparagine" evidence="3">
    <location>
        <position position="59"/>
    </location>
</feature>